<proteinExistence type="evidence at transcript level"/>
<gene>
    <name type="primary">dcaf10</name>
    <name type="synonym">wdr32</name>
</gene>
<evidence type="ECO:0000250" key="1"/>
<evidence type="ECO:0000256" key="2">
    <source>
        <dbReference type="SAM" id="MobiDB-lite"/>
    </source>
</evidence>
<evidence type="ECO:0000305" key="3"/>
<reference key="1">
    <citation type="submission" date="2002-12" db="EMBL/GenBank/DDBJ databases">
        <authorList>
            <consortium name="NIH - Xenopus Gene Collection (XGC) project"/>
        </authorList>
    </citation>
    <scope>NUCLEOTIDE SEQUENCE [LARGE SCALE MRNA]</scope>
    <source>
        <tissue>Embryo</tissue>
    </source>
</reference>
<accession>Q8AVS9</accession>
<comment type="function">
    <text evidence="1">May function as a substrate receptor for CUL4-DDB1 E3 ubiquitin-protein ligase complex.</text>
</comment>
<comment type="pathway">
    <text>Protein modification; protein ubiquitination.</text>
</comment>
<comment type="similarity">
    <text evidence="3">Belongs to the WD repeat DCAF10 family.</text>
</comment>
<protein>
    <recommendedName>
        <fullName>DDB1- and CUL4-associated factor 10</fullName>
    </recommendedName>
    <alternativeName>
        <fullName>WD repeat-containing protein 32</fullName>
    </alternativeName>
</protein>
<organism>
    <name type="scientific">Xenopus laevis</name>
    <name type="common">African clawed frog</name>
    <dbReference type="NCBI Taxonomy" id="8355"/>
    <lineage>
        <taxon>Eukaryota</taxon>
        <taxon>Metazoa</taxon>
        <taxon>Chordata</taxon>
        <taxon>Craniata</taxon>
        <taxon>Vertebrata</taxon>
        <taxon>Euteleostomi</taxon>
        <taxon>Amphibia</taxon>
        <taxon>Batrachia</taxon>
        <taxon>Anura</taxon>
        <taxon>Pipoidea</taxon>
        <taxon>Pipidae</taxon>
        <taxon>Xenopodinae</taxon>
        <taxon>Xenopus</taxon>
        <taxon>Xenopus</taxon>
    </lineage>
</organism>
<sequence length="457" mass="51022">MEGCTKDGAAVQSSGASTAGSIFWWLKDRSLGRGICVDPARDNFRTMTSLYSSIHPADSVNLSTRTHGAVFNLEYSPDGSVLTLACEQTEVLLFDPLSSKHIKTLSEAHEDCVNNIRFLDNRMFATCSDDTTIALWDLRKLNSKACTLHGHTSWVKNIEYDKNTRLLVTSGFDGNVIIWDTNRCTEDGCPHKKFFHTRFLMRMRLTPDCSKMLISTSSGYLLILHELDLTKSLEVGSYPILRARRTASTSDMTSTSSETRPSSSPCHNSDSGPLFEKHMSRSSQREGTSPRNSLEVLTPEVPGERDRGNCITSLQLHPKGWATLLRCSSNTDDQEWTCVYEFQEGTPVRQVSPRCSLRLTHYIEEANVGRGYIKELCFSPDGRMIASPHGYGIRLLGFDSQCKELVDCLPKEAGTLQEIRSLYSHKDVVLTTKFSPTHCQIASGCLSGRVSLYQPKF</sequence>
<feature type="chain" id="PRO_0000306836" description="DDB1- and CUL4-associated factor 10">
    <location>
        <begin position="1"/>
        <end position="457"/>
    </location>
</feature>
<feature type="repeat" description="WD 1">
    <location>
        <begin position="65"/>
        <end position="104"/>
    </location>
</feature>
<feature type="repeat" description="WD 2">
    <location>
        <begin position="108"/>
        <end position="146"/>
    </location>
</feature>
<feature type="repeat" description="WD 3">
    <location>
        <begin position="150"/>
        <end position="189"/>
    </location>
</feature>
<feature type="repeat" description="WD 4">
    <location>
        <begin position="195"/>
        <end position="234"/>
    </location>
</feature>
<feature type="repeat" description="WD 5">
    <location>
        <begin position="306"/>
        <end position="346"/>
    </location>
</feature>
<feature type="repeat" description="WD 6">
    <location>
        <begin position="368"/>
        <end position="406"/>
    </location>
</feature>
<feature type="repeat" description="WD 7">
    <location>
        <begin position="424"/>
        <end position="457"/>
    </location>
</feature>
<feature type="region of interest" description="Disordered" evidence="2">
    <location>
        <begin position="246"/>
        <end position="304"/>
    </location>
</feature>
<feature type="compositionally biased region" description="Low complexity" evidence="2">
    <location>
        <begin position="246"/>
        <end position="265"/>
    </location>
</feature>
<feature type="compositionally biased region" description="Polar residues" evidence="2">
    <location>
        <begin position="281"/>
        <end position="292"/>
    </location>
</feature>
<keyword id="KW-1185">Reference proteome</keyword>
<keyword id="KW-0677">Repeat</keyword>
<keyword id="KW-0833">Ubl conjugation pathway</keyword>
<keyword id="KW-0853">WD repeat</keyword>
<dbReference type="EMBL" id="BC041284">
    <property type="protein sequence ID" value="AAH41284.1"/>
    <property type="molecule type" value="mRNA"/>
</dbReference>
<dbReference type="RefSeq" id="NP_001079393.1">
    <property type="nucleotide sequence ID" value="NM_001085924.1"/>
</dbReference>
<dbReference type="SMR" id="Q8AVS9"/>
<dbReference type="DNASU" id="379080"/>
<dbReference type="GeneID" id="379080"/>
<dbReference type="KEGG" id="xla:379080"/>
<dbReference type="AGR" id="Xenbase:XB-GENE-967162"/>
<dbReference type="CTD" id="379080"/>
<dbReference type="Xenbase" id="XB-GENE-967162">
    <property type="gene designation" value="dcaf10.L"/>
</dbReference>
<dbReference type="OrthoDB" id="20669at2759"/>
<dbReference type="UniPathway" id="UPA00143"/>
<dbReference type="Proteomes" id="UP000186698">
    <property type="component" value="Chromosome 1L"/>
</dbReference>
<dbReference type="Bgee" id="379080">
    <property type="expression patterns" value="Expressed in egg cell and 19 other cell types or tissues"/>
</dbReference>
<dbReference type="GO" id="GO:0080008">
    <property type="term" value="C:Cul4-RING E3 ubiquitin ligase complex"/>
    <property type="evidence" value="ECO:0000250"/>
    <property type="project" value="UniProtKB"/>
</dbReference>
<dbReference type="GO" id="GO:0016567">
    <property type="term" value="P:protein ubiquitination"/>
    <property type="evidence" value="ECO:0007669"/>
    <property type="project" value="UniProtKB-UniPathway"/>
</dbReference>
<dbReference type="FunFam" id="2.130.10.10:FF:000116">
    <property type="entry name" value="DDB1- and CUL4-associated factor 10"/>
    <property type="match status" value="1"/>
</dbReference>
<dbReference type="FunFam" id="2.130.10.10:FF:000321">
    <property type="entry name" value="DDB1- and CUL4-associated factor 10"/>
    <property type="match status" value="1"/>
</dbReference>
<dbReference type="Gene3D" id="2.130.10.10">
    <property type="entry name" value="YVTN repeat-like/Quinoprotein amine dehydrogenase"/>
    <property type="match status" value="2"/>
</dbReference>
<dbReference type="InterPro" id="IPR039085">
    <property type="entry name" value="DCA10"/>
</dbReference>
<dbReference type="InterPro" id="IPR015943">
    <property type="entry name" value="WD40/YVTN_repeat-like_dom_sf"/>
</dbReference>
<dbReference type="InterPro" id="IPR036322">
    <property type="entry name" value="WD40_repeat_dom_sf"/>
</dbReference>
<dbReference type="InterPro" id="IPR001680">
    <property type="entry name" value="WD40_rpt"/>
</dbReference>
<dbReference type="PANTHER" id="PTHR14588">
    <property type="entry name" value="DDB1- AND CUL4-ASSOCIATED FACTOR 10"/>
    <property type="match status" value="1"/>
</dbReference>
<dbReference type="PANTHER" id="PTHR14588:SF2">
    <property type="entry name" value="DDB1- AND CUL4-ASSOCIATED FACTOR 10"/>
    <property type="match status" value="1"/>
</dbReference>
<dbReference type="Pfam" id="PF00400">
    <property type="entry name" value="WD40"/>
    <property type="match status" value="3"/>
</dbReference>
<dbReference type="SMART" id="SM00320">
    <property type="entry name" value="WD40"/>
    <property type="match status" value="5"/>
</dbReference>
<dbReference type="SUPFAM" id="SSF50978">
    <property type="entry name" value="WD40 repeat-like"/>
    <property type="match status" value="1"/>
</dbReference>
<dbReference type="PROSITE" id="PS00678">
    <property type="entry name" value="WD_REPEATS_1"/>
    <property type="match status" value="1"/>
</dbReference>
<dbReference type="PROSITE" id="PS50082">
    <property type="entry name" value="WD_REPEATS_2"/>
    <property type="match status" value="2"/>
</dbReference>
<dbReference type="PROSITE" id="PS50294">
    <property type="entry name" value="WD_REPEATS_REGION"/>
    <property type="match status" value="1"/>
</dbReference>
<name>DCA10_XENLA</name>